<gene>
    <name evidence="1" type="primary">selU</name>
    <name type="ordered locus">SBO_0405</name>
</gene>
<proteinExistence type="inferred from homology"/>
<keyword id="KW-0711">Selenium</keyword>
<keyword id="KW-0808">Transferase</keyword>
<reference key="1">
    <citation type="journal article" date="2005" name="Nucleic Acids Res.">
        <title>Genome dynamics and diversity of Shigella species, the etiologic agents of bacillary dysentery.</title>
        <authorList>
            <person name="Yang F."/>
            <person name="Yang J."/>
            <person name="Zhang X."/>
            <person name="Chen L."/>
            <person name="Jiang Y."/>
            <person name="Yan Y."/>
            <person name="Tang X."/>
            <person name="Wang J."/>
            <person name="Xiong Z."/>
            <person name="Dong J."/>
            <person name="Xue Y."/>
            <person name="Zhu Y."/>
            <person name="Xu X."/>
            <person name="Sun L."/>
            <person name="Chen S."/>
            <person name="Nie H."/>
            <person name="Peng J."/>
            <person name="Xu J."/>
            <person name="Wang Y."/>
            <person name="Yuan Z."/>
            <person name="Wen Y."/>
            <person name="Yao Z."/>
            <person name="Shen Y."/>
            <person name="Qiang B."/>
            <person name="Hou Y."/>
            <person name="Yu J."/>
            <person name="Jin Q."/>
        </authorList>
    </citation>
    <scope>NUCLEOTIDE SEQUENCE [LARGE SCALE GENOMIC DNA]</scope>
    <source>
        <strain>Sb227</strain>
    </source>
</reference>
<accession>Q324Z4</accession>
<protein>
    <recommendedName>
        <fullName evidence="1">tRNA 2-selenouridine synthase</fullName>
        <ecNumber evidence="1">2.9.1.3</ecNumber>
    </recommendedName>
</protein>
<feature type="chain" id="PRO_0000292716" description="tRNA 2-selenouridine synthase">
    <location>
        <begin position="1"/>
        <end position="364"/>
    </location>
</feature>
<feature type="domain" description="Rhodanese" evidence="1">
    <location>
        <begin position="14"/>
        <end position="137"/>
    </location>
</feature>
<feature type="active site" description="S-selanylcysteine intermediate" evidence="1">
    <location>
        <position position="97"/>
    </location>
</feature>
<name>SELU_SHIBS</name>
<evidence type="ECO:0000255" key="1">
    <source>
        <dbReference type="HAMAP-Rule" id="MF_01622"/>
    </source>
</evidence>
<comment type="function">
    <text evidence="1">Involved in the post-transcriptional modification of the uridine at the wobble position (U34) of tRNA(Lys), tRNA(Glu) and tRNA(Gln). Catalyzes the conversion of 2-thiouridine (S2U-RNA) to 2-selenouridine (Se2U-RNA). Acts in a two-step process involving geranylation of 2-thiouridine (S2U) to S-geranyl-2-thiouridine (geS2U) and subsequent selenation of the latter derivative to 2-selenouridine (Se2U) in the tRNA chain.</text>
</comment>
<comment type="catalytic activity">
    <reaction evidence="1">
        <text>5-methylaminomethyl-2-thiouridine(34) in tRNA + selenophosphate + (2E)-geranyl diphosphate + H2O + H(+) = 5-methylaminomethyl-2-selenouridine(34) in tRNA + (2E)-thiogeraniol + phosphate + diphosphate</text>
        <dbReference type="Rhea" id="RHEA:42716"/>
        <dbReference type="Rhea" id="RHEA-COMP:10195"/>
        <dbReference type="Rhea" id="RHEA-COMP:10196"/>
        <dbReference type="ChEBI" id="CHEBI:15377"/>
        <dbReference type="ChEBI" id="CHEBI:15378"/>
        <dbReference type="ChEBI" id="CHEBI:16144"/>
        <dbReference type="ChEBI" id="CHEBI:33019"/>
        <dbReference type="ChEBI" id="CHEBI:43474"/>
        <dbReference type="ChEBI" id="CHEBI:58057"/>
        <dbReference type="ChEBI" id="CHEBI:74455"/>
        <dbReference type="ChEBI" id="CHEBI:82743"/>
        <dbReference type="ChEBI" id="CHEBI:143703"/>
        <dbReference type="EC" id="2.9.1.3"/>
    </reaction>
    <physiologicalReaction direction="left-to-right" evidence="1">
        <dbReference type="Rhea" id="RHEA:42717"/>
    </physiologicalReaction>
</comment>
<comment type="catalytic activity">
    <reaction evidence="1">
        <text>5-methylaminomethyl-2-thiouridine(34) in tRNA + (2E)-geranyl diphosphate = 5-methylaminomethyl-S-(2E)-geranyl-thiouridine(34) in tRNA + diphosphate</text>
        <dbReference type="Rhea" id="RHEA:14085"/>
        <dbReference type="Rhea" id="RHEA-COMP:10195"/>
        <dbReference type="Rhea" id="RHEA-COMP:14654"/>
        <dbReference type="ChEBI" id="CHEBI:33019"/>
        <dbReference type="ChEBI" id="CHEBI:58057"/>
        <dbReference type="ChEBI" id="CHEBI:74455"/>
        <dbReference type="ChEBI" id="CHEBI:140632"/>
    </reaction>
    <physiologicalReaction direction="left-to-right" evidence="1">
        <dbReference type="Rhea" id="RHEA:14086"/>
    </physiologicalReaction>
</comment>
<comment type="catalytic activity">
    <reaction evidence="1">
        <text>5-methylaminomethyl-S-(2E)-geranyl-thiouridine(34) in tRNA + selenophosphate + H(+) = 5-methylaminomethyl-2-(Se-phospho)selenouridine(34) in tRNA + (2E)-thiogeraniol</text>
        <dbReference type="Rhea" id="RHEA:60172"/>
        <dbReference type="Rhea" id="RHEA-COMP:14654"/>
        <dbReference type="Rhea" id="RHEA-COMP:15523"/>
        <dbReference type="ChEBI" id="CHEBI:15378"/>
        <dbReference type="ChEBI" id="CHEBI:16144"/>
        <dbReference type="ChEBI" id="CHEBI:140632"/>
        <dbReference type="ChEBI" id="CHEBI:143702"/>
        <dbReference type="ChEBI" id="CHEBI:143703"/>
    </reaction>
    <physiologicalReaction direction="left-to-right" evidence="1">
        <dbReference type="Rhea" id="RHEA:60173"/>
    </physiologicalReaction>
</comment>
<comment type="catalytic activity">
    <reaction evidence="1">
        <text>5-methylaminomethyl-2-(Se-phospho)selenouridine(34) in tRNA + H2O = 5-methylaminomethyl-2-selenouridine(34) in tRNA + phosphate</text>
        <dbReference type="Rhea" id="RHEA:60176"/>
        <dbReference type="Rhea" id="RHEA-COMP:10196"/>
        <dbReference type="Rhea" id="RHEA-COMP:15523"/>
        <dbReference type="ChEBI" id="CHEBI:15377"/>
        <dbReference type="ChEBI" id="CHEBI:43474"/>
        <dbReference type="ChEBI" id="CHEBI:82743"/>
        <dbReference type="ChEBI" id="CHEBI:143702"/>
    </reaction>
    <physiologicalReaction direction="left-to-right" evidence="1">
        <dbReference type="Rhea" id="RHEA:60177"/>
    </physiologicalReaction>
</comment>
<comment type="subunit">
    <text evidence="1">Monomer.</text>
</comment>
<comment type="similarity">
    <text evidence="1">Belongs to the SelU family.</text>
</comment>
<sequence>MQERHTEQDYRALLIADTPIIDVRAPIEFEQGAMPAAINLPLMNNDERAAVGTCYKQQGSDAALALGHKLVAGEIRQQRIDAWRAACLQNPQGILCCARGGQRSHIVQSWLHAAGIDYPLVEGGYKALRQTAIQATIELAQKPIVLIGGCTGSGKTLLVQQQPNGVDLEGLARHRGSAFGRTLQPQLSQASFENLLAAEMLKTDARQDLRLWVLEDESRMIGSNHLPECLRERMTQAAIAVVEDPFEIRLERLNEEYFLRMHHDFTHAYGDEQGWQEYCEYLHHGLSAIKRRLGLQRYNELAAQLDTALTTQLTTGSTDGHLAWLVPLLKEYYDPMYRYQLEKKAEKVVFRGEWAEVAEWVKAR</sequence>
<organism>
    <name type="scientific">Shigella boydii serotype 4 (strain Sb227)</name>
    <dbReference type="NCBI Taxonomy" id="300268"/>
    <lineage>
        <taxon>Bacteria</taxon>
        <taxon>Pseudomonadati</taxon>
        <taxon>Pseudomonadota</taxon>
        <taxon>Gammaproteobacteria</taxon>
        <taxon>Enterobacterales</taxon>
        <taxon>Enterobacteriaceae</taxon>
        <taxon>Shigella</taxon>
    </lineage>
</organism>
<dbReference type="EC" id="2.9.1.3" evidence="1"/>
<dbReference type="EMBL" id="CP000036">
    <property type="protein sequence ID" value="ABB65114.1"/>
    <property type="molecule type" value="Genomic_DNA"/>
</dbReference>
<dbReference type="SMR" id="Q324Z4"/>
<dbReference type="KEGG" id="sbo:SBO_0405"/>
<dbReference type="HOGENOM" id="CLU_043456_1_0_6"/>
<dbReference type="Proteomes" id="UP000007067">
    <property type="component" value="Chromosome"/>
</dbReference>
<dbReference type="GO" id="GO:0016765">
    <property type="term" value="F:transferase activity, transferring alkyl or aryl (other than methyl) groups"/>
    <property type="evidence" value="ECO:0007669"/>
    <property type="project" value="UniProtKB-UniRule"/>
</dbReference>
<dbReference type="GO" id="GO:0043828">
    <property type="term" value="F:tRNA 2-selenouridine synthase activity"/>
    <property type="evidence" value="ECO:0007669"/>
    <property type="project" value="UniProtKB-EC"/>
</dbReference>
<dbReference type="GO" id="GO:0002098">
    <property type="term" value="P:tRNA wobble uridine modification"/>
    <property type="evidence" value="ECO:0007669"/>
    <property type="project" value="UniProtKB-UniRule"/>
</dbReference>
<dbReference type="CDD" id="cd01520">
    <property type="entry name" value="RHOD_YbbB"/>
    <property type="match status" value="1"/>
</dbReference>
<dbReference type="FunFam" id="3.40.250.10:FF:000009">
    <property type="entry name" value="tRNA 2-selenouridine/geranyl-2-thiouridine synthase"/>
    <property type="match status" value="1"/>
</dbReference>
<dbReference type="Gene3D" id="3.40.250.10">
    <property type="entry name" value="Rhodanese-like domain"/>
    <property type="match status" value="1"/>
</dbReference>
<dbReference type="HAMAP" id="MF_01622">
    <property type="entry name" value="tRNA_sel_U_synth"/>
    <property type="match status" value="1"/>
</dbReference>
<dbReference type="InterPro" id="IPR001763">
    <property type="entry name" value="Rhodanese-like_dom"/>
</dbReference>
<dbReference type="InterPro" id="IPR036873">
    <property type="entry name" value="Rhodanese-like_dom_sf"/>
</dbReference>
<dbReference type="InterPro" id="IPR017582">
    <property type="entry name" value="SelU"/>
</dbReference>
<dbReference type="NCBIfam" id="NF008749">
    <property type="entry name" value="PRK11784.1-1"/>
    <property type="match status" value="1"/>
</dbReference>
<dbReference type="NCBIfam" id="NF008751">
    <property type="entry name" value="PRK11784.1-3"/>
    <property type="match status" value="1"/>
</dbReference>
<dbReference type="NCBIfam" id="TIGR03167">
    <property type="entry name" value="tRNA_sel_U_synt"/>
    <property type="match status" value="1"/>
</dbReference>
<dbReference type="PANTHER" id="PTHR30401">
    <property type="entry name" value="TRNA 2-SELENOURIDINE SYNTHASE"/>
    <property type="match status" value="1"/>
</dbReference>
<dbReference type="PANTHER" id="PTHR30401:SF0">
    <property type="entry name" value="TRNA 2-SELENOURIDINE SYNTHASE"/>
    <property type="match status" value="1"/>
</dbReference>
<dbReference type="Pfam" id="PF00581">
    <property type="entry name" value="Rhodanese"/>
    <property type="match status" value="1"/>
</dbReference>
<dbReference type="SMART" id="SM00450">
    <property type="entry name" value="RHOD"/>
    <property type="match status" value="1"/>
</dbReference>
<dbReference type="SUPFAM" id="SSF52821">
    <property type="entry name" value="Rhodanese/Cell cycle control phosphatase"/>
    <property type="match status" value="1"/>
</dbReference>
<dbReference type="PROSITE" id="PS50206">
    <property type="entry name" value="RHODANESE_3"/>
    <property type="match status" value="1"/>
</dbReference>